<reference key="1">
    <citation type="journal article" date="1996" name="J. Bacteriol.">
        <title>The conjugal transfer system of Agrobacterium tumefaciens octopine-type Ti plasmids is closely related to the transfer system of an IncP plasmid and distantly related to Ti plasmid vir genes.</title>
        <authorList>
            <person name="Alt-Morbe J."/>
            <person name="Stryker J.L."/>
            <person name="Fuqua C."/>
            <person name="Li P.L."/>
            <person name="Farrand S.K."/>
            <person name="Winans S.C."/>
        </authorList>
    </citation>
    <scope>NUCLEOTIDE SEQUENCE [GENOMIC DNA]</scope>
</reference>
<reference key="2">
    <citation type="submission" date="1998-08" db="EMBL/GenBank/DDBJ databases">
        <authorList>
            <person name="Winans S.C."/>
        </authorList>
    </citation>
    <scope>SEQUENCE REVISION</scope>
</reference>
<sequence>MTVNRLLLLILPAAIMVAAMILTSGMEHRLAALGTTVQAKLMLGRAGLALPYIVAAAIGVIALFATNGSANIKAAGLSVLGGGAAVIIVAIAREIIRLNGISSHVPAGQSVLAYCDPATMVGAAAALFSGIFGLRVALKGNAAFATGGPRRIGGKRAVHGETDWMKMQEAAKLFPDTGGIVIGERYRVDRDSVAAMPFRADEKQSWGAGGKVPLLCFNGSFGSSHGIVFAGSGGFKTTSVTLPTALKWSSGLVVLDPSSEVAPMISEHRRQAGRKVIVLDPTASGVGFNALDWIGRHGNTKEEDIVAVATWIMTDNPRTASARDDFFRASAMQLLTALIADVCLSGHTEGEDQTLRQVRANLSEPEPKLRARLTKIYEGSESDFVKENVAVFVNMTPETFSGVYANAVKETHWLSYPNYAGLVSGDSFSTGDLADGRTDIFIALDLKVLEAHPGLARVVIGSLLNAIYNRNGNVKGRTLFLLDEVARLGYLRILETARDAGRKYGITLTMIFQSLGQMREAYGGRDATSKWFESASWISFSAINDPDTADYISKRCGDTTVEVDQTNRSTGMKGSSRSRSKQLSRRPLILPHEVLRMRGDEQIVFTSGNPPLRCGRAIWFRRDDMSASVGENRFQPENKA</sequence>
<protein>
    <recommendedName>
        <fullName>Conjugal transfer protein TraG</fullName>
    </recommendedName>
</protein>
<accession>Q44360</accession>
<gene>
    <name type="primary">traG</name>
</gene>
<evidence type="ECO:0000255" key="1"/>
<evidence type="ECO:0000256" key="2">
    <source>
        <dbReference type="SAM" id="MobiDB-lite"/>
    </source>
</evidence>
<evidence type="ECO:0000305" key="3"/>
<organism>
    <name type="scientific">Rhizobium radiobacter</name>
    <name type="common">Agrobacterium tumefaciens</name>
    <name type="synonym">Agrobacterium radiobacter</name>
    <dbReference type="NCBI Taxonomy" id="358"/>
    <lineage>
        <taxon>Bacteria</taxon>
        <taxon>Pseudomonadati</taxon>
        <taxon>Pseudomonadota</taxon>
        <taxon>Alphaproteobacteria</taxon>
        <taxon>Hyphomicrobiales</taxon>
        <taxon>Rhizobiaceae</taxon>
        <taxon>Rhizobium/Agrobacterium group</taxon>
        <taxon>Agrobacterium</taxon>
        <taxon>Agrobacterium tumefaciens complex</taxon>
    </lineage>
</organism>
<feature type="chain" id="PRO_0000221655" description="Conjugal transfer protein TraG">
    <location>
        <begin position="1"/>
        <end position="640"/>
    </location>
</feature>
<feature type="transmembrane region" description="Helical" evidence="1">
    <location>
        <begin position="6"/>
        <end position="26"/>
    </location>
</feature>
<feature type="transmembrane region" description="Helical" evidence="1">
    <location>
        <begin position="46"/>
        <end position="66"/>
    </location>
</feature>
<feature type="transmembrane region" description="Helical" evidence="1">
    <location>
        <begin position="72"/>
        <end position="92"/>
    </location>
</feature>
<feature type="transmembrane region" description="Helical" evidence="1">
    <location>
        <begin position="118"/>
        <end position="138"/>
    </location>
</feature>
<feature type="transmembrane region" description="Helical" evidence="1">
    <location>
        <begin position="212"/>
        <end position="232"/>
    </location>
</feature>
<feature type="transmembrane region" description="Helical" evidence="1">
    <location>
        <begin position="440"/>
        <end position="460"/>
    </location>
</feature>
<feature type="region of interest" description="Disordered" evidence="2">
    <location>
        <begin position="562"/>
        <end position="583"/>
    </location>
</feature>
<feature type="compositionally biased region" description="Polar residues" evidence="2">
    <location>
        <begin position="562"/>
        <end position="573"/>
    </location>
</feature>
<comment type="subcellular location">
    <subcellularLocation>
        <location evidence="3">Cell membrane</location>
        <topology evidence="3">Multi-pass membrane protein</topology>
    </subcellularLocation>
</comment>
<comment type="similarity">
    <text evidence="3">Belongs to the VirD4/TraG family.</text>
</comment>
<keyword id="KW-1003">Cell membrane</keyword>
<keyword id="KW-0184">Conjugation</keyword>
<keyword id="KW-0472">Membrane</keyword>
<keyword id="KW-0614">Plasmid</keyword>
<keyword id="KW-0812">Transmembrane</keyword>
<keyword id="KW-1133">Transmembrane helix</keyword>
<dbReference type="EMBL" id="AF242881">
    <property type="protein sequence ID" value="AAC28113.1"/>
    <property type="molecule type" value="Genomic_DNA"/>
</dbReference>
<dbReference type="RefSeq" id="NP_059692.1">
    <property type="nucleotide sequence ID" value="NC_002377.1"/>
</dbReference>
<dbReference type="RefSeq" id="WP_010892380.1">
    <property type="nucleotide sequence ID" value="NZ_QSNU01000012.1"/>
</dbReference>
<dbReference type="SMR" id="Q44360"/>
<dbReference type="TCDB" id="3.A.7.1.1">
    <property type="family name" value="the type iv (conjugal dna-protein transfer or virb) secretory pathway (ivsp) family"/>
</dbReference>
<dbReference type="OrthoDB" id="9759295at2"/>
<dbReference type="GO" id="GO:0005886">
    <property type="term" value="C:plasma membrane"/>
    <property type="evidence" value="ECO:0007669"/>
    <property type="project" value="UniProtKB-SubCell"/>
</dbReference>
<dbReference type="CDD" id="cd01127">
    <property type="entry name" value="TrwB_TraG_TraD_VirD4"/>
    <property type="match status" value="1"/>
</dbReference>
<dbReference type="Gene3D" id="3.40.50.300">
    <property type="entry name" value="P-loop containing nucleotide triphosphate hydrolases"/>
    <property type="match status" value="1"/>
</dbReference>
<dbReference type="InterPro" id="IPR027417">
    <property type="entry name" value="P-loop_NTPase"/>
</dbReference>
<dbReference type="InterPro" id="IPR051539">
    <property type="entry name" value="T4SS-coupling_protein"/>
</dbReference>
<dbReference type="InterPro" id="IPR014135">
    <property type="entry name" value="Ti-typ_conjug_TS_TraG-like"/>
</dbReference>
<dbReference type="InterPro" id="IPR003688">
    <property type="entry name" value="TraG/VirD4"/>
</dbReference>
<dbReference type="NCBIfam" id="NF010394">
    <property type="entry name" value="PRK13822.1"/>
    <property type="match status" value="1"/>
</dbReference>
<dbReference type="NCBIfam" id="TIGR02767">
    <property type="entry name" value="TraG-Ti"/>
    <property type="match status" value="1"/>
</dbReference>
<dbReference type="PANTHER" id="PTHR37937">
    <property type="entry name" value="CONJUGATIVE TRANSFER: DNA TRANSPORT"/>
    <property type="match status" value="1"/>
</dbReference>
<dbReference type="PANTHER" id="PTHR37937:SF1">
    <property type="entry name" value="CONJUGATIVE TRANSFER: DNA TRANSPORT"/>
    <property type="match status" value="1"/>
</dbReference>
<dbReference type="Pfam" id="PF02534">
    <property type="entry name" value="T4SS-DNA_transf"/>
    <property type="match status" value="1"/>
</dbReference>
<dbReference type="SUPFAM" id="SSF52540">
    <property type="entry name" value="P-loop containing nucleoside triphosphate hydrolases"/>
    <property type="match status" value="1"/>
</dbReference>
<proteinExistence type="inferred from homology"/>
<name>TRAG_RHIRD</name>
<geneLocation type="plasmid">
    <name>pTiA6NC</name>
</geneLocation>